<keyword id="KW-0004">4Fe-4S</keyword>
<keyword id="KW-0028">Amino-acid biosynthesis</keyword>
<keyword id="KW-0150">Chloroplast</keyword>
<keyword id="KW-0198">Cysteine biosynthesis</keyword>
<keyword id="KW-1015">Disulfide bond</keyword>
<keyword id="KW-0408">Iron</keyword>
<keyword id="KW-0411">Iron-sulfur</keyword>
<keyword id="KW-0479">Metal-binding</keyword>
<keyword id="KW-0560">Oxidoreductase</keyword>
<keyword id="KW-0934">Plastid</keyword>
<keyword id="KW-0676">Redox-active center</keyword>
<keyword id="KW-1185">Reference proteome</keyword>
<keyword id="KW-0346">Stress response</keyword>
<keyword id="KW-0809">Transit peptide</keyword>
<evidence type="ECO:0000250" key="1"/>
<evidence type="ECO:0000255" key="2"/>
<evidence type="ECO:0000255" key="3">
    <source>
        <dbReference type="PROSITE-ProRule" id="PRU00691"/>
    </source>
</evidence>
<evidence type="ECO:0000305" key="4"/>
<feature type="transit peptide" description="Chloroplast" evidence="2">
    <location>
        <begin position="1"/>
        <end position="63"/>
    </location>
</feature>
<feature type="chain" id="PRO_0000400040" description="Probable 5'-adenylylsulfate reductase 1, chloroplastic">
    <location>
        <begin position="64"/>
        <end position="475"/>
    </location>
</feature>
<feature type="domain" description="Thioredoxin" evidence="3">
    <location>
        <begin position="341"/>
        <end position="475"/>
    </location>
</feature>
<feature type="region of interest" description="Reductase domain" evidence="1">
    <location>
        <begin position="72"/>
        <end position="327"/>
    </location>
</feature>
<feature type="active site" description="Nucleophile" evidence="1">
    <location>
        <position position="393"/>
    </location>
</feature>
<feature type="active site" description="Nucleophile" evidence="1">
    <location>
        <position position="396"/>
    </location>
</feature>
<feature type="disulfide bond" description="Redox-active" evidence="3">
    <location>
        <begin position="393"/>
        <end position="396"/>
    </location>
</feature>
<gene>
    <name type="primary">APR1</name>
    <name type="ordered locus">Os07g0509800</name>
    <name type="ordered locus">LOC_Os07g32570</name>
    <name type="ORF">P0409B11.14</name>
</gene>
<accession>Q6Z4A7</accession>
<proteinExistence type="evidence at transcript level"/>
<dbReference type="EC" id="1.8.4.9"/>
<dbReference type="EMBL" id="AP005185">
    <property type="protein sequence ID" value="BAC83952.1"/>
    <property type="molecule type" value="Genomic_DNA"/>
</dbReference>
<dbReference type="EMBL" id="AP008213">
    <property type="protein sequence ID" value="BAF21664.1"/>
    <property type="molecule type" value="Genomic_DNA"/>
</dbReference>
<dbReference type="EMBL" id="AP014963">
    <property type="status" value="NOT_ANNOTATED_CDS"/>
    <property type="molecule type" value="Genomic_DNA"/>
</dbReference>
<dbReference type="RefSeq" id="XP_015647625.1">
    <property type="nucleotide sequence ID" value="XM_015792139.1"/>
</dbReference>
<dbReference type="SMR" id="Q6Z4A7"/>
<dbReference type="BioGRID" id="812385">
    <property type="interactions" value="1"/>
</dbReference>
<dbReference type="FunCoup" id="Q6Z4A7">
    <property type="interactions" value="7"/>
</dbReference>
<dbReference type="STRING" id="39947.Q6Z4A7"/>
<dbReference type="PaxDb" id="39947-Q6Z4A7"/>
<dbReference type="KEGG" id="dosa:Os07g0509800"/>
<dbReference type="eggNOG" id="KOG0189">
    <property type="taxonomic scope" value="Eukaryota"/>
</dbReference>
<dbReference type="eggNOG" id="KOG0191">
    <property type="taxonomic scope" value="Eukaryota"/>
</dbReference>
<dbReference type="HOGENOM" id="CLU_044089_4_0_1"/>
<dbReference type="InParanoid" id="Q6Z4A7"/>
<dbReference type="OrthoDB" id="7869097at2759"/>
<dbReference type="Proteomes" id="UP000000763">
    <property type="component" value="Chromosome 7"/>
</dbReference>
<dbReference type="Proteomes" id="UP000059680">
    <property type="component" value="Chromosome 7"/>
</dbReference>
<dbReference type="GO" id="GO:0009507">
    <property type="term" value="C:chloroplast"/>
    <property type="evidence" value="ECO:0007669"/>
    <property type="project" value="UniProtKB-SubCell"/>
</dbReference>
<dbReference type="GO" id="GO:0051539">
    <property type="term" value="F:4 iron, 4 sulfur cluster binding"/>
    <property type="evidence" value="ECO:0007669"/>
    <property type="project" value="UniProtKB-KW"/>
</dbReference>
<dbReference type="GO" id="GO:0033741">
    <property type="term" value="F:adenylyl-sulfate reductase (glutathione) activity"/>
    <property type="evidence" value="ECO:0007669"/>
    <property type="project" value="UniProtKB-EC"/>
</dbReference>
<dbReference type="GO" id="GO:0046872">
    <property type="term" value="F:metal ion binding"/>
    <property type="evidence" value="ECO:0007669"/>
    <property type="project" value="UniProtKB-KW"/>
</dbReference>
<dbReference type="GO" id="GO:0004604">
    <property type="term" value="F:phosphoadenylyl-sulfate reductase (thioredoxin) activity"/>
    <property type="evidence" value="ECO:0007669"/>
    <property type="project" value="InterPro"/>
</dbReference>
<dbReference type="GO" id="GO:0019344">
    <property type="term" value="P:cysteine biosynthetic process"/>
    <property type="evidence" value="ECO:0007669"/>
    <property type="project" value="UniProtKB-KW"/>
</dbReference>
<dbReference type="GO" id="GO:0019379">
    <property type="term" value="P:sulfate assimilation, phosphoadenylyl sulfate reduction by phosphoadenylyl-sulfate reductase (thioredoxin)"/>
    <property type="evidence" value="ECO:0007669"/>
    <property type="project" value="InterPro"/>
</dbReference>
<dbReference type="CDD" id="cd23945">
    <property type="entry name" value="PAPS_reductase"/>
    <property type="match status" value="1"/>
</dbReference>
<dbReference type="FunFam" id="3.40.50.620:FF:000153">
    <property type="entry name" value="Phosphoadenosine phosphosulfate reductase"/>
    <property type="match status" value="1"/>
</dbReference>
<dbReference type="FunFam" id="3.40.30.10:FF:000252">
    <property type="entry name" value="Phosphoadenosine-phosphosulphate reductase"/>
    <property type="match status" value="1"/>
</dbReference>
<dbReference type="Gene3D" id="3.40.30.10">
    <property type="entry name" value="Glutaredoxin"/>
    <property type="match status" value="1"/>
</dbReference>
<dbReference type="Gene3D" id="3.40.50.620">
    <property type="entry name" value="HUPs"/>
    <property type="match status" value="1"/>
</dbReference>
<dbReference type="HAMAP" id="MF_00063">
    <property type="entry name" value="CysH"/>
    <property type="match status" value="1"/>
</dbReference>
<dbReference type="InterPro" id="IPR004511">
    <property type="entry name" value="PAPS/APS_Rdtase"/>
</dbReference>
<dbReference type="InterPro" id="IPR002500">
    <property type="entry name" value="PAPS_reduct_dom"/>
</dbReference>
<dbReference type="InterPro" id="IPR014729">
    <property type="entry name" value="Rossmann-like_a/b/a_fold"/>
</dbReference>
<dbReference type="InterPro" id="IPR004508">
    <property type="entry name" value="Thioredoxin-indep_APS_Rdtase"/>
</dbReference>
<dbReference type="InterPro" id="IPR036249">
    <property type="entry name" value="Thioredoxin-like_sf"/>
</dbReference>
<dbReference type="InterPro" id="IPR013766">
    <property type="entry name" value="Thioredoxin_domain"/>
</dbReference>
<dbReference type="NCBIfam" id="TIGR00424">
    <property type="entry name" value="APS_reduc"/>
    <property type="match status" value="1"/>
</dbReference>
<dbReference type="NCBIfam" id="NF002537">
    <property type="entry name" value="PRK02090.1"/>
    <property type="match status" value="1"/>
</dbReference>
<dbReference type="PANTHER" id="PTHR46482:SF9">
    <property type="entry name" value="5'-ADENYLYLSULFATE REDUCTASE 1, CHLOROPLASTIC"/>
    <property type="match status" value="1"/>
</dbReference>
<dbReference type="PANTHER" id="PTHR46482">
    <property type="entry name" value="5'-ADENYLYLSULFATE REDUCTASE 3, CHLOROPLASTIC"/>
    <property type="match status" value="1"/>
</dbReference>
<dbReference type="Pfam" id="PF01507">
    <property type="entry name" value="PAPS_reduct"/>
    <property type="match status" value="1"/>
</dbReference>
<dbReference type="Pfam" id="PF00085">
    <property type="entry name" value="Thioredoxin"/>
    <property type="match status" value="1"/>
</dbReference>
<dbReference type="SUPFAM" id="SSF52402">
    <property type="entry name" value="Adenine nucleotide alpha hydrolases-like"/>
    <property type="match status" value="1"/>
</dbReference>
<dbReference type="SUPFAM" id="SSF52833">
    <property type="entry name" value="Thioredoxin-like"/>
    <property type="match status" value="1"/>
</dbReference>
<dbReference type="PROSITE" id="PS51352">
    <property type="entry name" value="THIOREDOXIN_2"/>
    <property type="match status" value="1"/>
</dbReference>
<protein>
    <recommendedName>
        <fullName>Probable 5'-adenylylsulfate reductase 1, chloroplastic</fullName>
        <ecNumber>1.8.4.9</ecNumber>
    </recommendedName>
    <alternativeName>
        <fullName>Adenosine 5'-phosphosulfate 5'-adenylylsulfate sulfotransferase 1</fullName>
        <shortName>APS sulfotransferase 1</shortName>
    </alternativeName>
    <alternativeName>
        <fullName>Adenosine 5'-phosphosulfate reductase-like 1</fullName>
        <shortName>APR-like1</shortName>
        <shortName>OsAPRL1</shortName>
    </alternativeName>
    <alternativeName>
        <fullName>Thioredoxin-independent APS reductase 1</fullName>
    </alternativeName>
</protein>
<name>APR1_ORYSJ</name>
<comment type="function">
    <text evidence="1">Reduces sulfate for Cys biosynthesis.</text>
</comment>
<comment type="catalytic activity">
    <reaction>
        <text>glutathione disulfide + sulfite + AMP + 2 H(+) = adenosine 5'-phosphosulfate + 2 glutathione</text>
        <dbReference type="Rhea" id="RHEA:14141"/>
        <dbReference type="ChEBI" id="CHEBI:15378"/>
        <dbReference type="ChEBI" id="CHEBI:17359"/>
        <dbReference type="ChEBI" id="CHEBI:57925"/>
        <dbReference type="ChEBI" id="CHEBI:58243"/>
        <dbReference type="ChEBI" id="CHEBI:58297"/>
        <dbReference type="ChEBI" id="CHEBI:456215"/>
        <dbReference type="EC" id="1.8.4.9"/>
    </reaction>
</comment>
<comment type="cofactor">
    <cofactor evidence="1">
        <name>[4Fe-4S] cluster</name>
        <dbReference type="ChEBI" id="CHEBI:49883"/>
    </cofactor>
    <text evidence="1">Binds 1 [4Fe-4S] cluster.</text>
</comment>
<comment type="subcellular location">
    <subcellularLocation>
        <location evidence="4">Plastid</location>
        <location evidence="4">Chloroplast</location>
    </subcellularLocation>
</comment>
<comment type="domain">
    <text>The C-terminal domain may function as glutaredoxin and mediates the interaction of the enzyme with glutathione (GSH). Active in GSH-dependent reduction of hydroxyethyldisulfide, cystine, dehydroascorbate, insulin disulfides and ribonucleotide reductase.</text>
</comment>
<comment type="similarity">
    <text evidence="4">Belongs to the APS reductase family.</text>
</comment>
<organism>
    <name type="scientific">Oryza sativa subsp. japonica</name>
    <name type="common">Rice</name>
    <dbReference type="NCBI Taxonomy" id="39947"/>
    <lineage>
        <taxon>Eukaryota</taxon>
        <taxon>Viridiplantae</taxon>
        <taxon>Streptophyta</taxon>
        <taxon>Embryophyta</taxon>
        <taxon>Tracheophyta</taxon>
        <taxon>Spermatophyta</taxon>
        <taxon>Magnoliopsida</taxon>
        <taxon>Liliopsida</taxon>
        <taxon>Poales</taxon>
        <taxon>Poaceae</taxon>
        <taxon>BOP clade</taxon>
        <taxon>Oryzoideae</taxon>
        <taxon>Oryzeae</taxon>
        <taxon>Oryzinae</taxon>
        <taxon>Oryza</taxon>
        <taxon>Oryza sativa</taxon>
    </lineage>
</organism>
<reference key="1">
    <citation type="journal article" date="2005" name="Nature">
        <title>The map-based sequence of the rice genome.</title>
        <authorList>
            <consortium name="International rice genome sequencing project (IRGSP)"/>
        </authorList>
    </citation>
    <scope>NUCLEOTIDE SEQUENCE [LARGE SCALE GENOMIC DNA]</scope>
    <source>
        <strain>cv. Nipponbare</strain>
    </source>
</reference>
<reference key="2">
    <citation type="journal article" date="2008" name="Nucleic Acids Res.">
        <title>The rice annotation project database (RAP-DB): 2008 update.</title>
        <authorList>
            <consortium name="The rice annotation project (RAP)"/>
        </authorList>
    </citation>
    <scope>GENOME REANNOTATION</scope>
    <source>
        <strain>cv. Nipponbare</strain>
    </source>
</reference>
<reference key="3">
    <citation type="journal article" date="2013" name="Rice">
        <title>Improvement of the Oryza sativa Nipponbare reference genome using next generation sequence and optical map data.</title>
        <authorList>
            <person name="Kawahara Y."/>
            <person name="de la Bastide M."/>
            <person name="Hamilton J.P."/>
            <person name="Kanamori H."/>
            <person name="McCombie W.R."/>
            <person name="Ouyang S."/>
            <person name="Schwartz D.C."/>
            <person name="Tanaka T."/>
            <person name="Wu J."/>
            <person name="Zhou S."/>
            <person name="Childs K.L."/>
            <person name="Davidson R.M."/>
            <person name="Lin H."/>
            <person name="Quesada-Ocampo L."/>
            <person name="Vaillancourt B."/>
            <person name="Sakai H."/>
            <person name="Lee S.S."/>
            <person name="Kim J."/>
            <person name="Numa H."/>
            <person name="Itoh T."/>
            <person name="Buell C.R."/>
            <person name="Matsumoto T."/>
        </authorList>
    </citation>
    <scope>GENOME REANNOTATION</scope>
    <source>
        <strain>cv. Nipponbare</strain>
    </source>
</reference>
<sequence length="475" mass="50591">MASATASISSHSVALRDLKAARIGAVKQQVAAAPAAGTAAARAQRARAVRPLRAAEPARQPVSASAAAAPAAAPVAEDAAAAAVDAPAPAVDYEALAQELQGASPLEIMDRALAMFGSDIAIAFSGAEDVALIEYAKLTGRPFRVFSLDTGRLNPETYQLFDKVEKHYGIRIEYMFPDAGEVQALVRAKGLFSFYEDGHQECCRARKVRPLRRALRGLRAWITGQRKDQSPGTRAAIPVVQVDPSFEGLAGGAGSLVKWNPVANVDGKDVWTFLRAMDVPVNALHAQGYVSIGCEPCTRPVLPGQHEREGRWWWEDAKAKECGLHKGNIDDQGGAAAAAAHKAGGANGNGSAGAPDIFESSGVVSLTRAGVENLLRLESRAEPWLVVLYAPWCPFCQAMEASYLELAERLGGAGGGVKVGKFRADGEQKAFAQQELQLQSFPTILLFPSRTARPIKYPSEKRDVDSLLAFVNSLR</sequence>